<proteinExistence type="inferred from homology"/>
<name>CYSH_SHIFL</name>
<reference key="1">
    <citation type="journal article" date="2002" name="Nucleic Acids Res.">
        <title>Genome sequence of Shigella flexneri 2a: insights into pathogenicity through comparison with genomes of Escherichia coli K12 and O157.</title>
        <authorList>
            <person name="Jin Q."/>
            <person name="Yuan Z."/>
            <person name="Xu J."/>
            <person name="Wang Y."/>
            <person name="Shen Y."/>
            <person name="Lu W."/>
            <person name="Wang J."/>
            <person name="Liu H."/>
            <person name="Yang J."/>
            <person name="Yang F."/>
            <person name="Zhang X."/>
            <person name="Zhang J."/>
            <person name="Yang G."/>
            <person name="Wu H."/>
            <person name="Qu D."/>
            <person name="Dong J."/>
            <person name="Sun L."/>
            <person name="Xue Y."/>
            <person name="Zhao A."/>
            <person name="Gao Y."/>
            <person name="Zhu J."/>
            <person name="Kan B."/>
            <person name="Ding K."/>
            <person name="Chen S."/>
            <person name="Cheng H."/>
            <person name="Yao Z."/>
            <person name="He B."/>
            <person name="Chen R."/>
            <person name="Ma D."/>
            <person name="Qiang B."/>
            <person name="Wen Y."/>
            <person name="Hou Y."/>
            <person name="Yu J."/>
        </authorList>
    </citation>
    <scope>NUCLEOTIDE SEQUENCE [LARGE SCALE GENOMIC DNA]</scope>
    <source>
        <strain>301 / Serotype 2a</strain>
    </source>
</reference>
<reference key="2">
    <citation type="journal article" date="2003" name="Infect. Immun.">
        <title>Complete genome sequence and comparative genomics of Shigella flexneri serotype 2a strain 2457T.</title>
        <authorList>
            <person name="Wei J."/>
            <person name="Goldberg M.B."/>
            <person name="Burland V."/>
            <person name="Venkatesan M.M."/>
            <person name="Deng W."/>
            <person name="Fournier G."/>
            <person name="Mayhew G.F."/>
            <person name="Plunkett G. III"/>
            <person name="Rose D.J."/>
            <person name="Darling A."/>
            <person name="Mau B."/>
            <person name="Perna N.T."/>
            <person name="Payne S.M."/>
            <person name="Runyen-Janecky L.J."/>
            <person name="Zhou S."/>
            <person name="Schwartz D.C."/>
            <person name="Blattner F.R."/>
        </authorList>
    </citation>
    <scope>NUCLEOTIDE SEQUENCE [LARGE SCALE GENOMIC DNA]</scope>
    <source>
        <strain>ATCC 700930 / 2457T / Serotype 2a</strain>
    </source>
</reference>
<gene>
    <name evidence="2" type="primary">cysH</name>
    <name type="ordered locus">SF2778</name>
    <name type="ordered locus">S2971</name>
</gene>
<organism>
    <name type="scientific">Shigella flexneri</name>
    <dbReference type="NCBI Taxonomy" id="623"/>
    <lineage>
        <taxon>Bacteria</taxon>
        <taxon>Pseudomonadati</taxon>
        <taxon>Pseudomonadota</taxon>
        <taxon>Gammaproteobacteria</taxon>
        <taxon>Enterobacterales</taxon>
        <taxon>Enterobacteriaceae</taxon>
        <taxon>Shigella</taxon>
    </lineage>
</organism>
<feature type="initiator methionine" description="Removed" evidence="1">
    <location>
        <position position="1"/>
    </location>
</feature>
<feature type="chain" id="PRO_0000100645" description="Phosphoadenosine 5'-phosphosulfate reductase">
    <location>
        <begin position="2"/>
        <end position="244"/>
    </location>
</feature>
<feature type="active site" description="Nucleophile; cysteine thiosulfonate intermediate" evidence="2">
    <location>
        <position position="239"/>
    </location>
</feature>
<evidence type="ECO:0000250" key="1"/>
<evidence type="ECO:0000255" key="2">
    <source>
        <dbReference type="HAMAP-Rule" id="MF_00063"/>
    </source>
</evidence>
<keyword id="KW-0963">Cytoplasm</keyword>
<keyword id="KW-0560">Oxidoreductase</keyword>
<keyword id="KW-1185">Reference proteome</keyword>
<dbReference type="EC" id="1.8.4.8" evidence="2"/>
<dbReference type="EMBL" id="AE005674">
    <property type="protein sequence ID" value="AAN44267.2"/>
    <property type="molecule type" value="Genomic_DNA"/>
</dbReference>
<dbReference type="EMBL" id="AE014073">
    <property type="protein sequence ID" value="AAP18092.1"/>
    <property type="molecule type" value="Genomic_DNA"/>
</dbReference>
<dbReference type="RefSeq" id="NP_708560.2">
    <property type="nucleotide sequence ID" value="NC_004337.2"/>
</dbReference>
<dbReference type="RefSeq" id="WP_000039841.1">
    <property type="nucleotide sequence ID" value="NZ_WPGW01000039.1"/>
</dbReference>
<dbReference type="SMR" id="Q7UBT0"/>
<dbReference type="STRING" id="198214.SF2778"/>
<dbReference type="PaxDb" id="198214-SF2778"/>
<dbReference type="GeneID" id="1027439"/>
<dbReference type="KEGG" id="sfl:SF2778"/>
<dbReference type="KEGG" id="sfx:S2971"/>
<dbReference type="PATRIC" id="fig|198214.7.peg.3306"/>
<dbReference type="HOGENOM" id="CLU_044089_3_0_6"/>
<dbReference type="UniPathway" id="UPA00140">
    <property type="reaction ID" value="UER00206"/>
</dbReference>
<dbReference type="Proteomes" id="UP000001006">
    <property type="component" value="Chromosome"/>
</dbReference>
<dbReference type="Proteomes" id="UP000002673">
    <property type="component" value="Chromosome"/>
</dbReference>
<dbReference type="GO" id="GO:0005737">
    <property type="term" value="C:cytoplasm"/>
    <property type="evidence" value="ECO:0007669"/>
    <property type="project" value="UniProtKB-SubCell"/>
</dbReference>
<dbReference type="GO" id="GO:0004604">
    <property type="term" value="F:phosphoadenylyl-sulfate reductase (thioredoxin) activity"/>
    <property type="evidence" value="ECO:0007669"/>
    <property type="project" value="UniProtKB-UniRule"/>
</dbReference>
<dbReference type="GO" id="GO:0070814">
    <property type="term" value="P:hydrogen sulfide biosynthetic process"/>
    <property type="evidence" value="ECO:0007669"/>
    <property type="project" value="UniProtKB-UniRule"/>
</dbReference>
<dbReference type="GO" id="GO:0019379">
    <property type="term" value="P:sulfate assimilation, phosphoadenylyl sulfate reduction by phosphoadenylyl-sulfate reductase (thioredoxin)"/>
    <property type="evidence" value="ECO:0007669"/>
    <property type="project" value="UniProtKB-UniRule"/>
</dbReference>
<dbReference type="CDD" id="cd23945">
    <property type="entry name" value="PAPS_reductase"/>
    <property type="match status" value="1"/>
</dbReference>
<dbReference type="FunFam" id="3.40.50.620:FF:000043">
    <property type="entry name" value="Phosphoadenosine phosphosulfate reductase"/>
    <property type="match status" value="1"/>
</dbReference>
<dbReference type="Gene3D" id="3.40.50.620">
    <property type="entry name" value="HUPs"/>
    <property type="match status" value="1"/>
</dbReference>
<dbReference type="HAMAP" id="MF_00063">
    <property type="entry name" value="CysH"/>
    <property type="match status" value="1"/>
</dbReference>
<dbReference type="InterPro" id="IPR004511">
    <property type="entry name" value="PAPS/APS_Rdtase"/>
</dbReference>
<dbReference type="InterPro" id="IPR002500">
    <property type="entry name" value="PAPS_reduct_dom"/>
</dbReference>
<dbReference type="InterPro" id="IPR011800">
    <property type="entry name" value="PAPS_reductase_CysH"/>
</dbReference>
<dbReference type="InterPro" id="IPR014729">
    <property type="entry name" value="Rossmann-like_a/b/a_fold"/>
</dbReference>
<dbReference type="NCBIfam" id="TIGR00434">
    <property type="entry name" value="cysH"/>
    <property type="match status" value="1"/>
</dbReference>
<dbReference type="NCBIfam" id="TIGR02057">
    <property type="entry name" value="PAPS_reductase"/>
    <property type="match status" value="1"/>
</dbReference>
<dbReference type="NCBIfam" id="NF002537">
    <property type="entry name" value="PRK02090.1"/>
    <property type="match status" value="1"/>
</dbReference>
<dbReference type="PANTHER" id="PTHR46509">
    <property type="entry name" value="PHOSPHOADENOSINE PHOSPHOSULFATE REDUCTASE"/>
    <property type="match status" value="1"/>
</dbReference>
<dbReference type="PANTHER" id="PTHR46509:SF1">
    <property type="entry name" value="PHOSPHOADENOSINE PHOSPHOSULFATE REDUCTASE"/>
    <property type="match status" value="1"/>
</dbReference>
<dbReference type="Pfam" id="PF01507">
    <property type="entry name" value="PAPS_reduct"/>
    <property type="match status" value="1"/>
</dbReference>
<dbReference type="PIRSF" id="PIRSF000857">
    <property type="entry name" value="PAPS_reductase"/>
    <property type="match status" value="1"/>
</dbReference>
<dbReference type="SUPFAM" id="SSF52402">
    <property type="entry name" value="Adenine nucleotide alpha hydrolases-like"/>
    <property type="match status" value="1"/>
</dbReference>
<sequence>MSKLDLNALNELPKVDRILALAETNAELEKLDAEGRVAWALDNLPGEYVLSSSFGIQAAVSLHLVNQIHPDIPVILTDTGYLFPETYRFIDELTDKLKLNLKVYRATESAAWQEARYGKLWEQGVEGIEKYNDINKVEPMNRALKELNAQTWFAGLRREQSGSRANLPVLAIQRGVFKVLPIIDWDNRTIYQYLQKHGLKYHPLWDEGYLSVGDTHTTRKWEPGMAEEETRFFGLKRECGLHEG</sequence>
<comment type="function">
    <text evidence="2">Catalyzes the formation of sulfite from phosphoadenosine 5'-phosphosulfate (PAPS) using thioredoxin as an electron donor.</text>
</comment>
<comment type="catalytic activity">
    <reaction evidence="2">
        <text>[thioredoxin]-disulfide + sulfite + adenosine 3',5'-bisphosphate + 2 H(+) = [thioredoxin]-dithiol + 3'-phosphoadenylyl sulfate</text>
        <dbReference type="Rhea" id="RHEA:11724"/>
        <dbReference type="Rhea" id="RHEA-COMP:10698"/>
        <dbReference type="Rhea" id="RHEA-COMP:10700"/>
        <dbReference type="ChEBI" id="CHEBI:15378"/>
        <dbReference type="ChEBI" id="CHEBI:17359"/>
        <dbReference type="ChEBI" id="CHEBI:29950"/>
        <dbReference type="ChEBI" id="CHEBI:50058"/>
        <dbReference type="ChEBI" id="CHEBI:58339"/>
        <dbReference type="ChEBI" id="CHEBI:58343"/>
        <dbReference type="EC" id="1.8.4.8"/>
    </reaction>
</comment>
<comment type="pathway">
    <text evidence="2">Sulfur metabolism; hydrogen sulfide biosynthesis; sulfite from sulfate: step 3/3.</text>
</comment>
<comment type="subcellular location">
    <subcellularLocation>
        <location evidence="2">Cytoplasm</location>
    </subcellularLocation>
</comment>
<comment type="similarity">
    <text evidence="2">Belongs to the PAPS reductase family. CysH subfamily.</text>
</comment>
<protein>
    <recommendedName>
        <fullName evidence="2">Phosphoadenosine 5'-phosphosulfate reductase</fullName>
        <shortName evidence="2">PAPS reductase</shortName>
        <ecNumber evidence="2">1.8.4.8</ecNumber>
    </recommendedName>
    <alternativeName>
        <fullName evidence="2">3'-phosphoadenylylsulfate reductase</fullName>
    </alternativeName>
    <alternativeName>
        <fullName evidence="2">PAPS reductase, thioredoxin dependent</fullName>
    </alternativeName>
    <alternativeName>
        <fullName evidence="2">PAPS sulfotransferase</fullName>
    </alternativeName>
    <alternativeName>
        <fullName evidence="2">PAdoPS reductase</fullName>
    </alternativeName>
</protein>
<accession>Q7UBT0</accession>
<accession>Q83QE1</accession>